<feature type="chain" id="PRO_0000193699" description="Chitin synthase 3">
    <location>
        <begin position="1" status="less than"/>
        <end position="197" status="greater than"/>
    </location>
</feature>
<feature type="non-terminal residue">
    <location>
        <position position="1"/>
    </location>
</feature>
<feature type="non-terminal residue">
    <location>
        <position position="197"/>
    </location>
</feature>
<protein>
    <recommendedName>
        <fullName>Chitin synthase 3</fullName>
        <ecNumber>2.4.1.16</ecNumber>
    </recommendedName>
    <alternativeName>
        <fullName>Chitin-UDP acetyl-glucosaminyl transferase 3</fullName>
    </alternativeName>
    <alternativeName>
        <fullName>Class-III chitin synthase 3</fullName>
    </alternativeName>
</protein>
<evidence type="ECO:0000305" key="1"/>
<organism>
    <name type="scientific">Exophiala jeanselmei</name>
    <name type="common">Dematiaceous fungus</name>
    <name type="synonym">Phialophora jeanselmei</name>
    <dbReference type="NCBI Taxonomy" id="5584"/>
    <lineage>
        <taxon>Eukaryota</taxon>
        <taxon>Fungi</taxon>
        <taxon>Dikarya</taxon>
        <taxon>Ascomycota</taxon>
        <taxon>Pezizomycotina</taxon>
        <taxon>Eurotiomycetes</taxon>
        <taxon>Chaetothyriomycetidae</taxon>
        <taxon>Chaetothyriales</taxon>
        <taxon>Herpotrichiellaceae</taxon>
        <taxon>Exophiala</taxon>
    </lineage>
</organism>
<keyword id="KW-1003">Cell membrane</keyword>
<keyword id="KW-0961">Cell wall biogenesis/degradation</keyword>
<keyword id="KW-0328">Glycosyltransferase</keyword>
<keyword id="KW-0472">Membrane</keyword>
<keyword id="KW-0808">Transferase</keyword>
<keyword id="KW-0812">Transmembrane</keyword>
<proteinExistence type="inferred from homology"/>
<accession>P30587</accession>
<gene>
    <name type="primary">CHS3</name>
</gene>
<reference key="1">
    <citation type="journal article" date="1992" name="Proc. Natl. Acad. Sci. U.S.A.">
        <title>Classification of fungal chitin synthases.</title>
        <authorList>
            <person name="Bowen A.R."/>
            <person name="Chen-Wu J.L.-P."/>
            <person name="Momany M."/>
            <person name="Young R."/>
            <person name="Szaniszlo P.J."/>
            <person name="Robbins P.W."/>
        </authorList>
    </citation>
    <scope>NUCLEOTIDE SEQUENCE [GENOMIC DNA]</scope>
</reference>
<dbReference type="EC" id="2.4.1.16"/>
<dbReference type="EMBL" id="M82946">
    <property type="protein sequence ID" value="AAA33333.1"/>
    <property type="molecule type" value="Genomic_DNA"/>
</dbReference>
<dbReference type="SMR" id="P30587"/>
<dbReference type="CAZy" id="GT2">
    <property type="family name" value="Glycosyltransferase Family 2"/>
</dbReference>
<dbReference type="GO" id="GO:0030428">
    <property type="term" value="C:cell septum"/>
    <property type="evidence" value="ECO:0007669"/>
    <property type="project" value="TreeGrafter"/>
</dbReference>
<dbReference type="GO" id="GO:0005886">
    <property type="term" value="C:plasma membrane"/>
    <property type="evidence" value="ECO:0007669"/>
    <property type="project" value="UniProtKB-SubCell"/>
</dbReference>
<dbReference type="GO" id="GO:0004100">
    <property type="term" value="F:chitin synthase activity"/>
    <property type="evidence" value="ECO:0007669"/>
    <property type="project" value="UniProtKB-EC"/>
</dbReference>
<dbReference type="GO" id="GO:0071555">
    <property type="term" value="P:cell wall organization"/>
    <property type="evidence" value="ECO:0007669"/>
    <property type="project" value="UniProtKB-KW"/>
</dbReference>
<dbReference type="GO" id="GO:0006031">
    <property type="term" value="P:chitin biosynthetic process"/>
    <property type="evidence" value="ECO:0007669"/>
    <property type="project" value="InterPro"/>
</dbReference>
<dbReference type="InterPro" id="IPR004835">
    <property type="entry name" value="Chitin_synth"/>
</dbReference>
<dbReference type="InterPro" id="IPR004834">
    <property type="entry name" value="Chitin_synth_fun"/>
</dbReference>
<dbReference type="PANTHER" id="PTHR22914">
    <property type="entry name" value="CHITIN SYNTHASE"/>
    <property type="match status" value="1"/>
</dbReference>
<dbReference type="PANTHER" id="PTHR22914:SF11">
    <property type="entry name" value="CHITIN SYNTHASE B"/>
    <property type="match status" value="1"/>
</dbReference>
<dbReference type="Pfam" id="PF01644">
    <property type="entry name" value="Chitin_synth_1"/>
    <property type="match status" value="1"/>
</dbReference>
<sequence>SLDGAHAPWCDAEHRDIVNLKKSEFWNKGGPAWQKIVVCLVFDGIDPCDKNTLDLLATVGIYQDGVMKKDVDGKDTVVHIFEYTTQLSVTPNQQLIRPNDNDSTSLPPVQMIFCLKQKNSKKINSHRWLFNGFGRILNPEVCILLDAGTKPGPKSLMALWEAFYNDKDLGGACGEIHAMLGRGGVFGRKLLNPLVAA</sequence>
<comment type="function">
    <text evidence="1">Polymerizes chitin, a structural polymer of the cell wall and septum, by transferring the sugar moiety of UDP-GlcNAc to the non-reducing end of the growing chitin polymer.</text>
</comment>
<comment type="catalytic activity">
    <reaction>
        <text>[(1-&gt;4)-N-acetyl-beta-D-glucosaminyl](n) + UDP-N-acetyl-alpha-D-glucosamine = [(1-&gt;4)-N-acetyl-beta-D-glucosaminyl](n+1) + UDP + H(+)</text>
        <dbReference type="Rhea" id="RHEA:16637"/>
        <dbReference type="Rhea" id="RHEA-COMP:9593"/>
        <dbReference type="Rhea" id="RHEA-COMP:9595"/>
        <dbReference type="ChEBI" id="CHEBI:15378"/>
        <dbReference type="ChEBI" id="CHEBI:17029"/>
        <dbReference type="ChEBI" id="CHEBI:57705"/>
        <dbReference type="ChEBI" id="CHEBI:58223"/>
        <dbReference type="EC" id="2.4.1.16"/>
    </reaction>
</comment>
<comment type="subcellular location">
    <subcellularLocation>
        <location evidence="1">Cell membrane</location>
        <topology evidence="1">Multi-pass membrane protein</topology>
    </subcellularLocation>
</comment>
<comment type="similarity">
    <text evidence="1">Belongs to the chitin synthase family. Class III subfamily.</text>
</comment>
<name>CHS3_EXOJE</name>